<keyword id="KW-1185">Reference proteome</keyword>
<keyword id="KW-0687">Ribonucleoprotein</keyword>
<keyword id="KW-0689">Ribosomal protein</keyword>
<evidence type="ECO:0000255" key="1">
    <source>
        <dbReference type="HAMAP-Rule" id="MF_00291"/>
    </source>
</evidence>
<evidence type="ECO:0000305" key="2"/>
<sequence length="241" mass="26759">MATVSMRDMLKAGVHFGHQTRYWNPKMKPFIFGARNKVHIINLEKTVPMFNEALAELNKISARKGKILFVGTKRAASEAVKEAANSCDQFFVNHRWLGGMLTNWKTVRQSIKRLKDLETQSQDGTFEKLTKKEALMRTRELEKLENSLGGIKDMGGLPDALFVIDADHEHIAIKEANNLGIPVFAIVDTNSDPDGVDFVIPGNDDAIRAVSLYLGAVAATVREGRSQDLASQAEESFVEAE</sequence>
<reference key="1">
    <citation type="submission" date="2007-11" db="EMBL/GenBank/DDBJ databases">
        <authorList>
            <consortium name="The Salmonella enterica serovar Arizonae Genome Sequencing Project"/>
            <person name="McClelland M."/>
            <person name="Sanderson E.K."/>
            <person name="Porwollik S."/>
            <person name="Spieth J."/>
            <person name="Clifton W.S."/>
            <person name="Fulton R."/>
            <person name="Chunyan W."/>
            <person name="Wollam A."/>
            <person name="Shah N."/>
            <person name="Pepin K."/>
            <person name="Bhonagiri V."/>
            <person name="Nash W."/>
            <person name="Johnson M."/>
            <person name="Thiruvilangam P."/>
            <person name="Wilson R."/>
        </authorList>
    </citation>
    <scope>NUCLEOTIDE SEQUENCE [LARGE SCALE GENOMIC DNA]</scope>
    <source>
        <strain>ATCC BAA-731 / CDC346-86 / RSK2980</strain>
    </source>
</reference>
<comment type="similarity">
    <text evidence="1">Belongs to the universal ribosomal protein uS2 family.</text>
</comment>
<proteinExistence type="inferred from homology"/>
<protein>
    <recommendedName>
        <fullName evidence="1">Small ribosomal subunit protein uS2</fullName>
    </recommendedName>
    <alternativeName>
        <fullName evidence="2">30S ribosomal protein S2</fullName>
    </alternativeName>
</protein>
<accession>A9MPJ3</accession>
<feature type="chain" id="PRO_1000078897" description="Small ribosomal subunit protein uS2">
    <location>
        <begin position="1"/>
        <end position="241"/>
    </location>
</feature>
<gene>
    <name evidence="1" type="primary">rpsB</name>
    <name type="ordered locus">SARI_02787</name>
</gene>
<dbReference type="EMBL" id="CP000880">
    <property type="protein sequence ID" value="ABX22636.1"/>
    <property type="molecule type" value="Genomic_DNA"/>
</dbReference>
<dbReference type="SMR" id="A9MPJ3"/>
<dbReference type="STRING" id="41514.SARI_02787"/>
<dbReference type="KEGG" id="ses:SARI_02787"/>
<dbReference type="HOGENOM" id="CLU_040318_1_0_6"/>
<dbReference type="Proteomes" id="UP000002084">
    <property type="component" value="Chromosome"/>
</dbReference>
<dbReference type="GO" id="GO:0022627">
    <property type="term" value="C:cytosolic small ribosomal subunit"/>
    <property type="evidence" value="ECO:0007669"/>
    <property type="project" value="TreeGrafter"/>
</dbReference>
<dbReference type="GO" id="GO:0003735">
    <property type="term" value="F:structural constituent of ribosome"/>
    <property type="evidence" value="ECO:0007669"/>
    <property type="project" value="InterPro"/>
</dbReference>
<dbReference type="GO" id="GO:0006412">
    <property type="term" value="P:translation"/>
    <property type="evidence" value="ECO:0007669"/>
    <property type="project" value="UniProtKB-UniRule"/>
</dbReference>
<dbReference type="CDD" id="cd01425">
    <property type="entry name" value="RPS2"/>
    <property type="match status" value="1"/>
</dbReference>
<dbReference type="FunFam" id="1.10.287.610:FF:000001">
    <property type="entry name" value="30S ribosomal protein S2"/>
    <property type="match status" value="1"/>
</dbReference>
<dbReference type="Gene3D" id="3.40.50.10490">
    <property type="entry name" value="Glucose-6-phosphate isomerase like protein, domain 1"/>
    <property type="match status" value="1"/>
</dbReference>
<dbReference type="Gene3D" id="1.10.287.610">
    <property type="entry name" value="Helix hairpin bin"/>
    <property type="match status" value="1"/>
</dbReference>
<dbReference type="HAMAP" id="MF_00291_B">
    <property type="entry name" value="Ribosomal_uS2_B"/>
    <property type="match status" value="1"/>
</dbReference>
<dbReference type="InterPro" id="IPR001865">
    <property type="entry name" value="Ribosomal_uS2"/>
</dbReference>
<dbReference type="InterPro" id="IPR005706">
    <property type="entry name" value="Ribosomal_uS2_bac/mit/plastid"/>
</dbReference>
<dbReference type="InterPro" id="IPR018130">
    <property type="entry name" value="Ribosomal_uS2_CS"/>
</dbReference>
<dbReference type="InterPro" id="IPR023591">
    <property type="entry name" value="Ribosomal_uS2_flav_dom_sf"/>
</dbReference>
<dbReference type="NCBIfam" id="TIGR01011">
    <property type="entry name" value="rpsB_bact"/>
    <property type="match status" value="1"/>
</dbReference>
<dbReference type="PANTHER" id="PTHR12534">
    <property type="entry name" value="30S RIBOSOMAL PROTEIN S2 PROKARYOTIC AND ORGANELLAR"/>
    <property type="match status" value="1"/>
</dbReference>
<dbReference type="PANTHER" id="PTHR12534:SF0">
    <property type="entry name" value="SMALL RIBOSOMAL SUBUNIT PROTEIN US2M"/>
    <property type="match status" value="1"/>
</dbReference>
<dbReference type="Pfam" id="PF00318">
    <property type="entry name" value="Ribosomal_S2"/>
    <property type="match status" value="1"/>
</dbReference>
<dbReference type="PRINTS" id="PR00395">
    <property type="entry name" value="RIBOSOMALS2"/>
</dbReference>
<dbReference type="SUPFAM" id="SSF52313">
    <property type="entry name" value="Ribosomal protein S2"/>
    <property type="match status" value="1"/>
</dbReference>
<dbReference type="PROSITE" id="PS00962">
    <property type="entry name" value="RIBOSOMAL_S2_1"/>
    <property type="match status" value="1"/>
</dbReference>
<dbReference type="PROSITE" id="PS00963">
    <property type="entry name" value="RIBOSOMAL_S2_2"/>
    <property type="match status" value="1"/>
</dbReference>
<organism>
    <name type="scientific">Salmonella arizonae (strain ATCC BAA-731 / CDC346-86 / RSK2980)</name>
    <dbReference type="NCBI Taxonomy" id="41514"/>
    <lineage>
        <taxon>Bacteria</taxon>
        <taxon>Pseudomonadati</taxon>
        <taxon>Pseudomonadota</taxon>
        <taxon>Gammaproteobacteria</taxon>
        <taxon>Enterobacterales</taxon>
        <taxon>Enterobacteriaceae</taxon>
        <taxon>Salmonella</taxon>
    </lineage>
</organism>
<name>RS2_SALAR</name>